<accession>Q95VZ3</accession>
<accession>Q54D40</accession>
<evidence type="ECO:0000256" key="1">
    <source>
        <dbReference type="SAM" id="MobiDB-lite"/>
    </source>
</evidence>
<evidence type="ECO:0000269" key="2">
    <source>
    </source>
</evidence>
<evidence type="ECO:0000269" key="3">
    <source>
    </source>
</evidence>
<evidence type="ECO:0000305" key="4"/>
<sequence>MSEEISPNDRKFITNLLTQKNQESLLLSIGDKISKKKNKKPSKRIILITKNRIFFLKPSQNKVKKDIHLLDIQEIKSSTSNEFTIVAKVDNKQFSYGLITNKTDEIINQIRVTFNHQFFGCPEESTFKCTDIKDSRLVEIEQKDLPCGGFVETYQSICDHLGVPPRDDICWDMTNIISSKNIRSFNIGEIELPTSAGDTIRCLLGALKYNNYFKSFNFNNYTFNKEQFGYLAEVLKCNSTVEDLSLNNVGLKHDTMPIIATALSSNKNLALTAIDISNNQIEDKGMTAFSSYVASSLRGIASLDVSNTNCNKAGISVLTNALKKNIKMSSTLSYLNLSGNKMEADGSAGLSSFLASPNTLKTLNISNTTPSMETIVGALVIGCAELKTIDISDNKLTKKEVPHLVRFIGASSTLKHFNLSGTKVPVENLKELVVAITSNIYLQDVVLDLKNNDLGIAGARMLASLATDKLSNVIYLDVSENDFGDEGVSVICDGFVGNSTIKKLILNGNFKQSKTKSRPSAIESVISLLESECPLETLHMTVGNSKSPLKADILSLIYSLATNSSLLELDISGHQMGPKGAIGLGKALQTNKTLHTLIWDDNLTTAIGFAGFQVGLERNLTLKNMPTPLNDIIQCHREPKFQQIWKEIDSCINRNQSPTRAFEGNGGNSIGATNLSFLASGQQQGVEKLLNKIKSIGRKVTDPNNILIVKDAESTEKVIGGIHLIKESIHASLEMELNQKLKDFVQVVNDVINAKKNEMTQQILESMQNTFQSMDGPTIKRLATTIQYGSKDVDEQQIHSTLVKGAGAELSSRAHECFISALDIASDYTYEKITIGLDSVFKDLILEESQAQNEASGATPIPDSPVPTRSPQPTSPPITPQPTPTTNVPPVTAPRTGAAAPLKPANPPPVSTTTTPPVSTTPKPTQPVSKFGAKLSANSAVAEAIARNMGGGAPPIRKPVAPEPEPEPVTPTKDVTPLKSKPVVAPRSTPTTSTPTKTPVKKPSGPSVPGSLSDAPESDSAELTHVTASRPHIASKRKPPTRRPRPPTEN</sequence>
<protein>
    <recommendedName>
        <fullName>Protein CARMIL</fullName>
        <shortName>dDcarmil</shortName>
    </recommendedName>
    <alternativeName>
        <fullName>Capping protein, arp2/3 and myosin I linker</fullName>
    </alternativeName>
    <alternativeName>
        <fullName>Leucine-rich repeat-containing protein p116</fullName>
        <shortName>p116</shortName>
    </alternativeName>
</protein>
<name>CARML_DICDI</name>
<proteinExistence type="evidence at protein level"/>
<reference key="1">
    <citation type="journal article" date="2001" name="J. Cell Biol.">
        <title>The Dictyostelium CARMIL protein links capping protein and the Arp2/3 complex to type I myosins through their SH3 domains.</title>
        <authorList>
            <person name="Jung G."/>
            <person name="Remmert K."/>
            <person name="Wu X."/>
            <person name="Volosky J.M."/>
            <person name="Hammer J.A. III"/>
        </authorList>
    </citation>
    <scope>NUCLEOTIDE SEQUENCE [GENOMIC DNA]</scope>
    <scope>PROTEIN SEQUENCE OF 843-861 AND 980-986</scope>
    <scope>FUNCTION</scope>
    <scope>SUBUNIT</scope>
    <scope>SUBCELLULAR LOCATION</scope>
    <scope>DISRUPTION PHENOTYPE</scope>
</reference>
<reference key="2">
    <citation type="journal article" date="2005" name="Nature">
        <title>The genome of the social amoeba Dictyostelium discoideum.</title>
        <authorList>
            <person name="Eichinger L."/>
            <person name="Pachebat J.A."/>
            <person name="Gloeckner G."/>
            <person name="Rajandream M.A."/>
            <person name="Sucgang R."/>
            <person name="Berriman M."/>
            <person name="Song J."/>
            <person name="Olsen R."/>
            <person name="Szafranski K."/>
            <person name="Xu Q."/>
            <person name="Tunggal B."/>
            <person name="Kummerfeld S."/>
            <person name="Madera M."/>
            <person name="Konfortov B.A."/>
            <person name="Rivero F."/>
            <person name="Bankier A.T."/>
            <person name="Lehmann R."/>
            <person name="Hamlin N."/>
            <person name="Davies R."/>
            <person name="Gaudet P."/>
            <person name="Fey P."/>
            <person name="Pilcher K."/>
            <person name="Chen G."/>
            <person name="Saunders D."/>
            <person name="Sodergren E.J."/>
            <person name="Davis P."/>
            <person name="Kerhornou A."/>
            <person name="Nie X."/>
            <person name="Hall N."/>
            <person name="Anjard C."/>
            <person name="Hemphill L."/>
            <person name="Bason N."/>
            <person name="Farbrother P."/>
            <person name="Desany B."/>
            <person name="Just E."/>
            <person name="Morio T."/>
            <person name="Rost R."/>
            <person name="Churcher C.M."/>
            <person name="Cooper J."/>
            <person name="Haydock S."/>
            <person name="van Driessche N."/>
            <person name="Cronin A."/>
            <person name="Goodhead I."/>
            <person name="Muzny D.M."/>
            <person name="Mourier T."/>
            <person name="Pain A."/>
            <person name="Lu M."/>
            <person name="Harper D."/>
            <person name="Lindsay R."/>
            <person name="Hauser H."/>
            <person name="James K.D."/>
            <person name="Quiles M."/>
            <person name="Madan Babu M."/>
            <person name="Saito T."/>
            <person name="Buchrieser C."/>
            <person name="Wardroper A."/>
            <person name="Felder M."/>
            <person name="Thangavelu M."/>
            <person name="Johnson D."/>
            <person name="Knights A."/>
            <person name="Loulseged H."/>
            <person name="Mungall K.L."/>
            <person name="Oliver K."/>
            <person name="Price C."/>
            <person name="Quail M.A."/>
            <person name="Urushihara H."/>
            <person name="Hernandez J."/>
            <person name="Rabbinowitsch E."/>
            <person name="Steffen D."/>
            <person name="Sanders M."/>
            <person name="Ma J."/>
            <person name="Kohara Y."/>
            <person name="Sharp S."/>
            <person name="Simmonds M.N."/>
            <person name="Spiegler S."/>
            <person name="Tivey A."/>
            <person name="Sugano S."/>
            <person name="White B."/>
            <person name="Walker D."/>
            <person name="Woodward J.R."/>
            <person name="Winckler T."/>
            <person name="Tanaka Y."/>
            <person name="Shaulsky G."/>
            <person name="Schleicher M."/>
            <person name="Weinstock G.M."/>
            <person name="Rosenthal A."/>
            <person name="Cox E.C."/>
            <person name="Chisholm R.L."/>
            <person name="Gibbs R.A."/>
            <person name="Loomis W.F."/>
            <person name="Platzer M."/>
            <person name="Kay R.R."/>
            <person name="Williams J.G."/>
            <person name="Dear P.H."/>
            <person name="Noegel A.A."/>
            <person name="Barrell B.G."/>
            <person name="Kuspa A."/>
        </authorList>
    </citation>
    <scope>NUCLEOTIDE SEQUENCE [LARGE SCALE GENOMIC DNA]</scope>
    <source>
        <strain>AX4</strain>
    </source>
</reference>
<reference key="3">
    <citation type="journal article" date="2008" name="BMC Microbiol.">
        <title>Dictyostelium transcriptional responses to Pseudomonas aeruginosa: common and specific effects from PAO1 and PA14 strains.</title>
        <authorList>
            <person name="Carilla-Latorre S."/>
            <person name="Calvo-Garrido J."/>
            <person name="Bloomfield G."/>
            <person name="Skelton J."/>
            <person name="Kay R.R."/>
            <person name="Ivens A."/>
            <person name="Martinez J.L."/>
            <person name="Escalante R."/>
        </authorList>
    </citation>
    <scope>INDUCTION [LARGE SCALE ANALYSIS]</scope>
</reference>
<reference key="4">
    <citation type="journal article" date="2008" name="BMC Genomics">
        <title>Genome-wide transcriptional changes induced by phagocytosis or growth on bacteria in Dictyostelium.</title>
        <authorList>
            <person name="Sillo A."/>
            <person name="Bloomfield G."/>
            <person name="Balest A."/>
            <person name="Balbo A."/>
            <person name="Pergolizzi B."/>
            <person name="Peracino B."/>
            <person name="Skelton J."/>
            <person name="Ivens A."/>
            <person name="Bozzaro S."/>
        </authorList>
    </citation>
    <scope>IDENTIFICATION</scope>
</reference>
<dbReference type="EMBL" id="AF388524">
    <property type="protein sequence ID" value="AAK72255.1"/>
    <property type="molecule type" value="Genomic_DNA"/>
</dbReference>
<dbReference type="EMBL" id="AAFI02000190">
    <property type="protein sequence ID" value="EAL61172.1"/>
    <property type="molecule type" value="Genomic_DNA"/>
</dbReference>
<dbReference type="RefSeq" id="XP_629656.1">
    <property type="nucleotide sequence ID" value="XM_629654.1"/>
</dbReference>
<dbReference type="SMR" id="Q95VZ3"/>
<dbReference type="FunCoup" id="Q95VZ3">
    <property type="interactions" value="25"/>
</dbReference>
<dbReference type="STRING" id="44689.Q95VZ3"/>
<dbReference type="GlyGen" id="Q95VZ3">
    <property type="glycosylation" value="2 sites"/>
</dbReference>
<dbReference type="PaxDb" id="44689-DDB0185176"/>
<dbReference type="EnsemblProtists" id="EAL61172">
    <property type="protein sequence ID" value="EAL61172"/>
    <property type="gene ID" value="DDB_G0292386"/>
</dbReference>
<dbReference type="GeneID" id="8628720"/>
<dbReference type="KEGG" id="ddi:DDB_G0292386"/>
<dbReference type="dictyBase" id="DDB_G0292386">
    <property type="gene designation" value="carmil"/>
</dbReference>
<dbReference type="VEuPathDB" id="AmoebaDB:DDB_G0292386"/>
<dbReference type="eggNOG" id="KOG4242">
    <property type="taxonomic scope" value="Eukaryota"/>
</dbReference>
<dbReference type="HOGENOM" id="CLU_003119_3_0_1"/>
<dbReference type="InParanoid" id="Q95VZ3"/>
<dbReference type="OMA" id="SGHQMGN"/>
<dbReference type="PhylomeDB" id="Q95VZ3"/>
<dbReference type="Reactome" id="R-DDI-983231">
    <property type="pathway name" value="Factors involved in megakaryocyte development and platelet production"/>
</dbReference>
<dbReference type="PRO" id="PR:Q95VZ3"/>
<dbReference type="Proteomes" id="UP000002195">
    <property type="component" value="Chromosome 6"/>
</dbReference>
<dbReference type="GO" id="GO:0015629">
    <property type="term" value="C:actin cytoskeleton"/>
    <property type="evidence" value="ECO:0000304"/>
    <property type="project" value="dictyBase"/>
</dbReference>
<dbReference type="GO" id="GO:0031252">
    <property type="term" value="C:cell leading edge"/>
    <property type="evidence" value="ECO:0000314"/>
    <property type="project" value="dictyBase"/>
</dbReference>
<dbReference type="GO" id="GO:0030027">
    <property type="term" value="C:lamellipodium"/>
    <property type="evidence" value="ECO:0000318"/>
    <property type="project" value="GO_Central"/>
</dbReference>
<dbReference type="GO" id="GO:0061851">
    <property type="term" value="C:leading edge of lamellipodium"/>
    <property type="evidence" value="ECO:0000314"/>
    <property type="project" value="dictyBase"/>
</dbReference>
<dbReference type="GO" id="GO:0070685">
    <property type="term" value="C:macropinocytic cup"/>
    <property type="evidence" value="ECO:0000314"/>
    <property type="project" value="dictyBase"/>
</dbReference>
<dbReference type="GO" id="GO:0045335">
    <property type="term" value="C:phagocytic vesicle"/>
    <property type="evidence" value="ECO:0000314"/>
    <property type="project" value="dictyBase"/>
</dbReference>
<dbReference type="GO" id="GO:0005886">
    <property type="term" value="C:plasma membrane"/>
    <property type="evidence" value="ECO:0000318"/>
    <property type="project" value="GO_Central"/>
</dbReference>
<dbReference type="GO" id="GO:0031143">
    <property type="term" value="C:pseudopodium"/>
    <property type="evidence" value="ECO:0007669"/>
    <property type="project" value="UniProtKB-SubCell"/>
</dbReference>
<dbReference type="GO" id="GO:0017024">
    <property type="term" value="F:myosin I binding"/>
    <property type="evidence" value="ECO:0000314"/>
    <property type="project" value="dictyBase"/>
</dbReference>
<dbReference type="GO" id="GO:0016477">
    <property type="term" value="P:cell migration"/>
    <property type="evidence" value="ECO:0000318"/>
    <property type="project" value="GO_Central"/>
</dbReference>
<dbReference type="GO" id="GO:0034315">
    <property type="term" value="P:regulation of Arp2/3 complex-mediated actin nucleation"/>
    <property type="evidence" value="ECO:0000314"/>
    <property type="project" value="dictyBase"/>
</dbReference>
<dbReference type="Gene3D" id="2.30.29.30">
    <property type="entry name" value="Pleckstrin-homology domain (PH domain)/Phosphotyrosine-binding domain (PTB)"/>
    <property type="match status" value="1"/>
</dbReference>
<dbReference type="Gene3D" id="3.80.10.10">
    <property type="entry name" value="Ribonuclease Inhibitor"/>
    <property type="match status" value="1"/>
</dbReference>
<dbReference type="InterPro" id="IPR041245">
    <property type="entry name" value="CARMIL_PH"/>
</dbReference>
<dbReference type="InterPro" id="IPR001611">
    <property type="entry name" value="Leu-rich_rpt"/>
</dbReference>
<dbReference type="InterPro" id="IPR032675">
    <property type="entry name" value="LRR_dom_sf"/>
</dbReference>
<dbReference type="InterPro" id="IPR011993">
    <property type="entry name" value="PH-like_dom_sf"/>
</dbReference>
<dbReference type="InterPro" id="IPR051279">
    <property type="entry name" value="PP1-Reg/Actin-Interact_Protein"/>
</dbReference>
<dbReference type="PANTHER" id="PTHR24112">
    <property type="entry name" value="LEUCINE-RICH REPEAT, ISOFORM F-RELATED"/>
    <property type="match status" value="1"/>
</dbReference>
<dbReference type="PANTHER" id="PTHR24112:SF65">
    <property type="entry name" value="PROTEIN CARMIL"/>
    <property type="match status" value="1"/>
</dbReference>
<dbReference type="Pfam" id="PF17888">
    <property type="entry name" value="Carm_PH"/>
    <property type="match status" value="1"/>
</dbReference>
<dbReference type="Pfam" id="PF13516">
    <property type="entry name" value="LRR_6"/>
    <property type="match status" value="3"/>
</dbReference>
<dbReference type="PRINTS" id="PR01217">
    <property type="entry name" value="PRICHEXTENSN"/>
</dbReference>
<dbReference type="SMART" id="SM00368">
    <property type="entry name" value="LRR_RI"/>
    <property type="match status" value="8"/>
</dbReference>
<dbReference type="SUPFAM" id="SSF52047">
    <property type="entry name" value="RNI-like"/>
    <property type="match status" value="2"/>
</dbReference>
<gene>
    <name type="primary">carmil</name>
    <name type="ORF">DDB_G0292386</name>
</gene>
<keyword id="KW-0966">Cell projection</keyword>
<keyword id="KW-0903">Direct protein sequencing</keyword>
<keyword id="KW-0433">Leucine-rich repeat</keyword>
<keyword id="KW-1185">Reference proteome</keyword>
<keyword id="KW-0677">Repeat</keyword>
<feature type="chain" id="PRO_0000390402" description="Protein CARMIL">
    <location>
        <begin position="1"/>
        <end position="1050"/>
    </location>
</feature>
<feature type="repeat" description="LRR 1">
    <location>
        <begin position="243"/>
        <end position="266"/>
    </location>
</feature>
<feature type="repeat" description="LRR 2">
    <location>
        <begin position="268"/>
        <end position="291"/>
    </location>
</feature>
<feature type="repeat" description="LRR 3">
    <location>
        <begin position="329"/>
        <end position="352"/>
    </location>
</feature>
<feature type="repeat" description="LRR 4">
    <location>
        <begin position="383"/>
        <end position="409"/>
    </location>
</feature>
<feature type="repeat" description="LRR 5">
    <location>
        <begin position="411"/>
        <end position="436"/>
    </location>
</feature>
<feature type="repeat" description="LRR 6">
    <location>
        <begin position="442"/>
        <end position="464"/>
    </location>
</feature>
<feature type="repeat" description="LRR 7">
    <location>
        <begin position="470"/>
        <end position="493"/>
    </location>
</feature>
<feature type="repeat" description="LRR 8">
    <location>
        <begin position="563"/>
        <end position="590"/>
    </location>
</feature>
<feature type="region of interest" description="Required for interaction with capping protein">
    <location>
        <begin position="1"/>
        <end position="179"/>
    </location>
</feature>
<feature type="region of interest" description="Disordered" evidence="1">
    <location>
        <begin position="851"/>
        <end position="931"/>
    </location>
</feature>
<feature type="region of interest" description="Disordered" evidence="1">
    <location>
        <begin position="945"/>
        <end position="1050"/>
    </location>
</feature>
<feature type="short sequence motif" description="PXXP motif; important for binding to SH3 domain-containing proteins">
    <location>
        <begin position="959"/>
        <end position="963"/>
    </location>
</feature>
<feature type="short sequence motif" description="PXXP motif; important for binding to SH3 domain-containing proteins">
    <location>
        <begin position="968"/>
        <end position="971"/>
    </location>
</feature>
<feature type="compositionally biased region" description="Pro residues" evidence="1">
    <location>
        <begin position="862"/>
        <end position="883"/>
    </location>
</feature>
<feature type="compositionally biased region" description="Low complexity" evidence="1">
    <location>
        <begin position="884"/>
        <end position="903"/>
    </location>
</feature>
<feature type="compositionally biased region" description="Low complexity" evidence="1">
    <location>
        <begin position="911"/>
        <end position="929"/>
    </location>
</feature>
<feature type="compositionally biased region" description="Low complexity" evidence="1">
    <location>
        <begin position="988"/>
        <end position="1011"/>
    </location>
</feature>
<feature type="compositionally biased region" description="Basic residues" evidence="1">
    <location>
        <begin position="1033"/>
        <end position="1050"/>
    </location>
</feature>
<feature type="sequence conflict" description="In Ref. 1; AA sequence." evidence="4" ref="1">
    <original>Q</original>
    <variation>G</variation>
    <location>
        <position position="852"/>
    </location>
</feature>
<comment type="function">
    <text evidence="2">Serves as the scaffold for the assembly of a complex that links key players in the nucleation and termination of actin filament assembly with a ubiquitous barbed end-directed motor. This complex is composed of at least capping proteins (acpA and acpB), the Arp2/3 complex, type I myosins (myoB and myoC) and carmil. It has at least a modest ability to activate Arp2/3-dependent actin nucleation. CARMIL localizes along with the Arp2/3 complex, myoB, and myoC in the leading edge of cells and it plays a significant role in the structure and function of these actin-rich cellular extensions.</text>
</comment>
<comment type="subunit">
    <text evidence="2">Interacts (via PXXP domains) with myoB and myoC (via SH3 domain). Interacts (via N-terminus) with the capping proteins acpA and acpB. Interacts (via the region between the LRR domain and COOH-terminal proline-rich domain) with the seven member Arp2/3 complex (arpB/Arp2, arpC/Arp3, arcA/p41-arc, arcB/p34-arc, arcC/p21-arc, arcD/p20-arc and arcE/p16-arc).</text>
</comment>
<comment type="subcellular location">
    <subcellularLocation>
        <location evidence="2">Cell projection</location>
        <location evidence="2">Pseudopodium</location>
    </subcellularLocation>
    <text>Found in dynamic actin-rich cellular extensions, including the leading edge of cells undergoing chemotactic migration, and dorsal, cup-like, macropinocytic extensions.</text>
</comment>
<comment type="induction">
    <text evidence="3">Down-regulated by Pseudomonas aeruginosa, PAO1 strain and PA14 strain infection.</text>
</comment>
<comment type="disruption phenotype">
    <text evidence="2">Cells exhibit a striking defect in the formation of dorsal, cup-like, macropinocytic structures, a concomitant reduction in the rate of fluid phase pinocytosis, a significant decrease in the efficiency of chemotactic aggregation, and a decrease in cellular F-actin content.</text>
</comment>
<comment type="similarity">
    <text evidence="4">Belongs to the CARMIL family.</text>
</comment>
<organism>
    <name type="scientific">Dictyostelium discoideum</name>
    <name type="common">Social amoeba</name>
    <dbReference type="NCBI Taxonomy" id="44689"/>
    <lineage>
        <taxon>Eukaryota</taxon>
        <taxon>Amoebozoa</taxon>
        <taxon>Evosea</taxon>
        <taxon>Eumycetozoa</taxon>
        <taxon>Dictyostelia</taxon>
        <taxon>Dictyosteliales</taxon>
        <taxon>Dictyosteliaceae</taxon>
        <taxon>Dictyostelium</taxon>
    </lineage>
</organism>